<dbReference type="EMBL" id="CP001186">
    <property type="protein sequence ID" value="ACK93282.1"/>
    <property type="molecule type" value="Genomic_DNA"/>
</dbReference>
<dbReference type="RefSeq" id="WP_000392711.1">
    <property type="nucleotide sequence ID" value="NC_011772.1"/>
</dbReference>
<dbReference type="SMR" id="B7IYG8"/>
<dbReference type="GeneID" id="67468614"/>
<dbReference type="KEGG" id="bcg:BCG9842_B0802"/>
<dbReference type="HOGENOM" id="CLU_057217_5_2_9"/>
<dbReference type="Proteomes" id="UP000006744">
    <property type="component" value="Chromosome"/>
</dbReference>
<dbReference type="GO" id="GO:0005737">
    <property type="term" value="C:cytoplasm"/>
    <property type="evidence" value="ECO:0007669"/>
    <property type="project" value="UniProtKB-SubCell"/>
</dbReference>
<dbReference type="GO" id="GO:0000774">
    <property type="term" value="F:adenyl-nucleotide exchange factor activity"/>
    <property type="evidence" value="ECO:0007669"/>
    <property type="project" value="InterPro"/>
</dbReference>
<dbReference type="GO" id="GO:0042803">
    <property type="term" value="F:protein homodimerization activity"/>
    <property type="evidence" value="ECO:0007669"/>
    <property type="project" value="InterPro"/>
</dbReference>
<dbReference type="GO" id="GO:0051087">
    <property type="term" value="F:protein-folding chaperone binding"/>
    <property type="evidence" value="ECO:0007669"/>
    <property type="project" value="InterPro"/>
</dbReference>
<dbReference type="GO" id="GO:0051082">
    <property type="term" value="F:unfolded protein binding"/>
    <property type="evidence" value="ECO:0007669"/>
    <property type="project" value="TreeGrafter"/>
</dbReference>
<dbReference type="GO" id="GO:0006457">
    <property type="term" value="P:protein folding"/>
    <property type="evidence" value="ECO:0007669"/>
    <property type="project" value="InterPro"/>
</dbReference>
<dbReference type="CDD" id="cd00446">
    <property type="entry name" value="GrpE"/>
    <property type="match status" value="1"/>
</dbReference>
<dbReference type="FunFam" id="2.30.22.10:FF:000001">
    <property type="entry name" value="Protein GrpE"/>
    <property type="match status" value="1"/>
</dbReference>
<dbReference type="FunFam" id="3.90.20.20:FF:000002">
    <property type="entry name" value="Protein GrpE"/>
    <property type="match status" value="1"/>
</dbReference>
<dbReference type="Gene3D" id="3.90.20.20">
    <property type="match status" value="1"/>
</dbReference>
<dbReference type="Gene3D" id="2.30.22.10">
    <property type="entry name" value="Head domain of nucleotide exchange factor GrpE"/>
    <property type="match status" value="1"/>
</dbReference>
<dbReference type="HAMAP" id="MF_01151">
    <property type="entry name" value="GrpE"/>
    <property type="match status" value="1"/>
</dbReference>
<dbReference type="InterPro" id="IPR000740">
    <property type="entry name" value="GrpE"/>
</dbReference>
<dbReference type="InterPro" id="IPR013805">
    <property type="entry name" value="GrpE_coiled_coil"/>
</dbReference>
<dbReference type="InterPro" id="IPR009012">
    <property type="entry name" value="GrpE_head"/>
</dbReference>
<dbReference type="NCBIfam" id="NF010738">
    <property type="entry name" value="PRK14140.1"/>
    <property type="match status" value="1"/>
</dbReference>
<dbReference type="PANTHER" id="PTHR21237">
    <property type="entry name" value="GRPE PROTEIN"/>
    <property type="match status" value="1"/>
</dbReference>
<dbReference type="PANTHER" id="PTHR21237:SF23">
    <property type="entry name" value="GRPE PROTEIN HOMOLOG, MITOCHONDRIAL"/>
    <property type="match status" value="1"/>
</dbReference>
<dbReference type="Pfam" id="PF01025">
    <property type="entry name" value="GrpE"/>
    <property type="match status" value="1"/>
</dbReference>
<dbReference type="PRINTS" id="PR00773">
    <property type="entry name" value="GRPEPROTEIN"/>
</dbReference>
<dbReference type="SUPFAM" id="SSF58014">
    <property type="entry name" value="Coiled-coil domain of nucleotide exchange factor GrpE"/>
    <property type="match status" value="1"/>
</dbReference>
<dbReference type="SUPFAM" id="SSF51064">
    <property type="entry name" value="Head domain of nucleotide exchange factor GrpE"/>
    <property type="match status" value="1"/>
</dbReference>
<dbReference type="PROSITE" id="PS01071">
    <property type="entry name" value="GRPE"/>
    <property type="match status" value="1"/>
</dbReference>
<sequence>MEERNEQVVEEVKEAQVEEAVTPENSEETVEEKSEAALLQEKVDELQAKLTETEGRTLRLQADFENYKRRVQMDKQAAEKYRAQSLVSDILPALDNFERAMQVEATDEQTKSLLQGMEMVHRQLLEALTKEGVEVIEAVGKQFDPNEHQAIMQVEDSEFESNAVVEEFQKGYKLKDRVIRPSMVKVNQ</sequence>
<proteinExistence type="inferred from homology"/>
<keyword id="KW-0143">Chaperone</keyword>
<keyword id="KW-0963">Cytoplasm</keyword>
<keyword id="KW-0346">Stress response</keyword>
<reference key="1">
    <citation type="submission" date="2008-10" db="EMBL/GenBank/DDBJ databases">
        <title>Genome sequence of Bacillus cereus G9842.</title>
        <authorList>
            <person name="Dodson R.J."/>
            <person name="Durkin A.S."/>
            <person name="Rosovitz M.J."/>
            <person name="Rasko D.A."/>
            <person name="Hoffmaster A."/>
            <person name="Ravel J."/>
            <person name="Sutton G."/>
        </authorList>
    </citation>
    <scope>NUCLEOTIDE SEQUENCE [LARGE SCALE GENOMIC DNA]</scope>
    <source>
        <strain>G9842</strain>
    </source>
</reference>
<evidence type="ECO:0000255" key="1">
    <source>
        <dbReference type="HAMAP-Rule" id="MF_01151"/>
    </source>
</evidence>
<evidence type="ECO:0000256" key="2">
    <source>
        <dbReference type="SAM" id="MobiDB-lite"/>
    </source>
</evidence>
<gene>
    <name evidence="1" type="primary">grpE</name>
    <name type="ordered locus">BCG9842_B0802</name>
</gene>
<name>GRPE_BACC2</name>
<organism>
    <name type="scientific">Bacillus cereus (strain G9842)</name>
    <dbReference type="NCBI Taxonomy" id="405531"/>
    <lineage>
        <taxon>Bacteria</taxon>
        <taxon>Bacillati</taxon>
        <taxon>Bacillota</taxon>
        <taxon>Bacilli</taxon>
        <taxon>Bacillales</taxon>
        <taxon>Bacillaceae</taxon>
        <taxon>Bacillus</taxon>
        <taxon>Bacillus cereus group</taxon>
    </lineage>
</organism>
<feature type="chain" id="PRO_1000137539" description="Protein GrpE">
    <location>
        <begin position="1"/>
        <end position="188"/>
    </location>
</feature>
<feature type="region of interest" description="Disordered" evidence="2">
    <location>
        <begin position="1"/>
        <end position="31"/>
    </location>
</feature>
<feature type="compositionally biased region" description="Basic and acidic residues" evidence="2">
    <location>
        <begin position="1"/>
        <end position="16"/>
    </location>
</feature>
<accession>B7IYG8</accession>
<protein>
    <recommendedName>
        <fullName evidence="1">Protein GrpE</fullName>
    </recommendedName>
    <alternativeName>
        <fullName evidence="1">HSP-70 cofactor</fullName>
    </alternativeName>
</protein>
<comment type="function">
    <text evidence="1">Participates actively in the response to hyperosmotic and heat shock by preventing the aggregation of stress-denatured proteins, in association with DnaK and GrpE. It is the nucleotide exchange factor for DnaK and may function as a thermosensor. Unfolded proteins bind initially to DnaJ; upon interaction with the DnaJ-bound protein, DnaK hydrolyzes its bound ATP, resulting in the formation of a stable complex. GrpE releases ADP from DnaK; ATP binding to DnaK triggers the release of the substrate protein, thus completing the reaction cycle. Several rounds of ATP-dependent interactions between DnaJ, DnaK and GrpE are required for fully efficient folding.</text>
</comment>
<comment type="subunit">
    <text evidence="1">Homodimer.</text>
</comment>
<comment type="subcellular location">
    <subcellularLocation>
        <location evidence="1">Cytoplasm</location>
    </subcellularLocation>
</comment>
<comment type="similarity">
    <text evidence="1">Belongs to the GrpE family.</text>
</comment>